<organism>
    <name type="scientific">Bacillus cereus (strain ATCC 14579 / DSM 31 / CCUG 7414 / JCM 2152 / NBRC 15305 / NCIMB 9373 / NCTC 2599 / NRRL B-3711)</name>
    <dbReference type="NCBI Taxonomy" id="226900"/>
    <lineage>
        <taxon>Bacteria</taxon>
        <taxon>Bacillati</taxon>
        <taxon>Bacillota</taxon>
        <taxon>Bacilli</taxon>
        <taxon>Bacillales</taxon>
        <taxon>Bacillaceae</taxon>
        <taxon>Bacillus</taxon>
        <taxon>Bacillus cereus group</taxon>
    </lineage>
</organism>
<name>PSIE_BACCR</name>
<accession>Q813A6</accession>
<sequence length="140" mass="16559">MFVLKNFKIVFSYFPIVLQYILNVALICLGVVLSVFLMKEVIQFMQELKLDGNESSYHLIDSIVVFFLYFEFIVMIIKYFQMNFHFPLRYFIYIGITAIVRLIIIDHDSPLDLLLYACAIFVLISALFIANSKMMRWDLE</sequence>
<protein>
    <recommendedName>
        <fullName evidence="1">Protein PsiE homolog</fullName>
    </recommendedName>
</protein>
<proteinExistence type="inferred from homology"/>
<dbReference type="EMBL" id="AE016877">
    <property type="protein sequence ID" value="AAP10423.1"/>
    <property type="molecule type" value="Genomic_DNA"/>
</dbReference>
<dbReference type="RefSeq" id="NP_833222.1">
    <property type="nucleotide sequence ID" value="NC_004722.1"/>
</dbReference>
<dbReference type="SMR" id="Q813A6"/>
<dbReference type="KEGG" id="bce:BC3488"/>
<dbReference type="PATRIC" id="fig|226900.8.peg.3576"/>
<dbReference type="HOGENOM" id="CLU_127561_0_1_9"/>
<dbReference type="Proteomes" id="UP000001417">
    <property type="component" value="Chromosome"/>
</dbReference>
<dbReference type="GO" id="GO:0005886">
    <property type="term" value="C:plasma membrane"/>
    <property type="evidence" value="ECO:0000318"/>
    <property type="project" value="GO_Central"/>
</dbReference>
<dbReference type="GO" id="GO:0016036">
    <property type="term" value="P:cellular response to phosphate starvation"/>
    <property type="evidence" value="ECO:0007669"/>
    <property type="project" value="InterPro"/>
</dbReference>
<dbReference type="HAMAP" id="MF_01048">
    <property type="entry name" value="PsiE"/>
    <property type="match status" value="1"/>
</dbReference>
<dbReference type="InterPro" id="IPR009315">
    <property type="entry name" value="P_starv_induced_PsiE"/>
</dbReference>
<dbReference type="InterPro" id="IPR020948">
    <property type="entry name" value="P_starv_induced_PsiE-like"/>
</dbReference>
<dbReference type="NCBIfam" id="NF002765">
    <property type="entry name" value="PRK02833.1-3"/>
    <property type="match status" value="1"/>
</dbReference>
<dbReference type="PANTHER" id="PTHR37819">
    <property type="entry name" value="PROTEIN PSIE"/>
    <property type="match status" value="1"/>
</dbReference>
<dbReference type="PANTHER" id="PTHR37819:SF1">
    <property type="entry name" value="PROTEIN PSIE"/>
    <property type="match status" value="1"/>
</dbReference>
<dbReference type="Pfam" id="PF06146">
    <property type="entry name" value="PsiE"/>
    <property type="match status" value="1"/>
</dbReference>
<dbReference type="PIRSF" id="PIRSF029598">
    <property type="entry name" value="PsiE"/>
    <property type="match status" value="1"/>
</dbReference>
<reference key="1">
    <citation type="journal article" date="2003" name="Nature">
        <title>Genome sequence of Bacillus cereus and comparative analysis with Bacillus anthracis.</title>
        <authorList>
            <person name="Ivanova N."/>
            <person name="Sorokin A."/>
            <person name="Anderson I."/>
            <person name="Galleron N."/>
            <person name="Candelon B."/>
            <person name="Kapatral V."/>
            <person name="Bhattacharyya A."/>
            <person name="Reznik G."/>
            <person name="Mikhailova N."/>
            <person name="Lapidus A."/>
            <person name="Chu L."/>
            <person name="Mazur M."/>
            <person name="Goltsman E."/>
            <person name="Larsen N."/>
            <person name="D'Souza M."/>
            <person name="Walunas T."/>
            <person name="Grechkin Y."/>
            <person name="Pusch G."/>
            <person name="Haselkorn R."/>
            <person name="Fonstein M."/>
            <person name="Ehrlich S.D."/>
            <person name="Overbeek R."/>
            <person name="Kyrpides N.C."/>
        </authorList>
    </citation>
    <scope>NUCLEOTIDE SEQUENCE [LARGE SCALE GENOMIC DNA]</scope>
    <source>
        <strain>ATCC 14579 / DSM 31 / CCUG 7414 / JCM 2152 / NBRC 15305 / NCIMB 9373 / NCTC 2599 / NRRL B-3711</strain>
    </source>
</reference>
<evidence type="ECO:0000255" key="1">
    <source>
        <dbReference type="HAMAP-Rule" id="MF_01048"/>
    </source>
</evidence>
<feature type="chain" id="PRO_0000160280" description="Protein PsiE homolog">
    <location>
        <begin position="1"/>
        <end position="140"/>
    </location>
</feature>
<feature type="transmembrane region" description="Helical" evidence="1">
    <location>
        <begin position="16"/>
        <end position="36"/>
    </location>
</feature>
<feature type="transmembrane region" description="Helical" evidence="1">
    <location>
        <begin position="57"/>
        <end position="77"/>
    </location>
</feature>
<feature type="transmembrane region" description="Helical" evidence="1">
    <location>
        <begin position="85"/>
        <end position="105"/>
    </location>
</feature>
<feature type="transmembrane region" description="Helical" evidence="1">
    <location>
        <begin position="110"/>
        <end position="130"/>
    </location>
</feature>
<comment type="subcellular location">
    <subcellularLocation>
        <location evidence="1">Cell membrane</location>
        <topology evidence="1">Multi-pass membrane protein</topology>
    </subcellularLocation>
</comment>
<comment type="similarity">
    <text evidence="1">Belongs to the PsiE family.</text>
</comment>
<gene>
    <name evidence="1" type="primary">psiE</name>
    <name type="ordered locus">BC_3488</name>
</gene>
<keyword id="KW-1003">Cell membrane</keyword>
<keyword id="KW-0472">Membrane</keyword>
<keyword id="KW-1185">Reference proteome</keyword>
<keyword id="KW-0812">Transmembrane</keyword>
<keyword id="KW-1133">Transmembrane helix</keyword>